<gene>
    <name type="primary">Cdc20</name>
</gene>
<organism>
    <name type="scientific">Mus musculus</name>
    <name type="common">Mouse</name>
    <dbReference type="NCBI Taxonomy" id="10090"/>
    <lineage>
        <taxon>Eukaryota</taxon>
        <taxon>Metazoa</taxon>
        <taxon>Chordata</taxon>
        <taxon>Craniata</taxon>
        <taxon>Vertebrata</taxon>
        <taxon>Euteleostomi</taxon>
        <taxon>Mammalia</taxon>
        <taxon>Eutheria</taxon>
        <taxon>Euarchontoglires</taxon>
        <taxon>Glires</taxon>
        <taxon>Rodentia</taxon>
        <taxon>Myomorpha</taxon>
        <taxon>Muroidea</taxon>
        <taxon>Muridae</taxon>
        <taxon>Murinae</taxon>
        <taxon>Mus</taxon>
        <taxon>Mus</taxon>
    </lineage>
</organism>
<comment type="function">
    <text evidence="2 6 8 9">Substrate-specific adapter of the anaphase promoting complex/cyclosome (APC/C) complex that confers substrate specificity by binding to substrates and targeting them to the APC/C complex for ubiquitination and degradation (By similarity). Recognizes and binds the destruction box (D box) on protein substrates (By similarity). Involved in the metaphase/anaphase transition of cell cycle (PubMed:32666501). Is regulated by MAD2L1: in metaphase the MAD2L1-CDC20-APC/C ternary complex is inactive and in anaphase the CDC20-APC/C binary complex is active in degrading substrates (By similarity). The CDC20-APC/C complex positively regulates the formation of synaptic vesicle clustering at active zone to the presynaptic membrane in postmitotic neurons (PubMed:19900895). CDC20-APC/C-induced degradation of NEUROD2 induces presynaptic differentiation (PubMed:19900895). The CDC20-APC/C complex promotes proper dilation formation and radial migration by degrading CCDC41 (PubMed:34298015).</text>
</comment>
<comment type="pathway">
    <text>Protein modification; protein ubiquitination.</text>
</comment>
<comment type="subunit">
    <text evidence="2 4 5 6 7">Component of a complex with CDC20, CDC27, SPATC1 and TUBG1 (PubMed:15280373). Interacts with NEUROD2 (PubMed:19900895). Interacts with dimeric MAD2L1 in its closed conformation form (By similarity). Interacts with BUB1B (By similarity). The phosphorylated form interacts with APC/C (By similarity). Interacts with NINL (By similarity). May interact with MAD2L2 (By similarity). Interacts with CDK5RAP2 (By similarity). Interacts with SIRT2 (PubMed:22014574). Interacts with isoform 1 of NEK2 (By similarity). Interacts with HSF1 (via phosphorylated form); this interaction occurs in mitosis in a MAD2L1-dependent manner and prevents PLK1-stimulated degradation of HSF1 by blocking the recruitment of the SCF(BTRC) ubiquitin ligase complex (By similarity). Interacts (via the N-terminal substrate-binding domain) with FBXO5 (PubMed:15526037). Interacts with CCNF (By similarity). Interacts with USP22 (By similarity).</text>
</comment>
<comment type="interaction">
    <interactant intactId="EBI-2551389">
        <id>Q9JJ66</id>
    </interactant>
    <interactant intactId="EBI-8060482">
        <id>Q8CDI2</id>
        <label>Fbxo43</label>
    </interactant>
    <organismsDiffer>false</organismsDiffer>
    <experiments>2</experiments>
</comment>
<comment type="interaction">
    <interactant intactId="EBI-2551389">
        <id>Q9JJ66</id>
    </interactant>
    <interactant intactId="EBI-911012">
        <id>Q8VDQ8</id>
        <label>Sirt2</label>
    </interactant>
    <organismsDiffer>false</organismsDiffer>
    <experiments>2</experiments>
</comment>
<comment type="subcellular location">
    <subcellularLocation>
        <location evidence="9">Cytoplasm</location>
        <location evidence="9">Cytoskeleton</location>
        <location evidence="9">Microtubule organizing center</location>
        <location evidence="9">Centrosome</location>
    </subcellularLocation>
    <subcellularLocation>
        <location evidence="2">Chromosome</location>
        <location evidence="2">Centromere</location>
        <location evidence="2">Kinetochore</location>
    </subcellularLocation>
    <subcellularLocation>
        <location evidence="2">Cytoplasm</location>
        <location evidence="2">Cytoskeleton</location>
        <location evidence="2">Spindle pole</location>
    </subcellularLocation>
</comment>
<comment type="PTM">
    <text evidence="7">Acetylated. Deacetylated at Lys-66 by SIRT2; deacetylation enhances the interaction of CDC20 with CDC27, leading to activation of anaphase promoting complex/cyclosome (APC/C).</text>
</comment>
<comment type="PTM">
    <text evidence="2">Phosphorylated during mitosis (By similarity). Phosphorylated by BUB1 at Ser-41; Ser-72; Ser-92; Ser-153; Thr-157 and Ser-161 (By similarity). Phosphorylated by NEK2 (By similarity).</text>
</comment>
<comment type="PTM">
    <text evidence="1">Dephosphorylated by CTDP1.</text>
</comment>
<comment type="PTM">
    <text evidence="2">Ubiquitinated and degraded by the proteasome during spindle assembly checkpoint (By similarity). Ubiquitinated at Lys-490 during prometaphase. Ubiquitination at Lys-485 and Lys-490 has no effect on its ability to bind the APC/C complex (By similarity). Ubiquitinated by UBR5 when not assembled in a multiprotein complex, leading to its degradation: UBR5 recognizes and binds a degron that is not accessible when CDC20 is part of a complex (By similarity).</text>
</comment>
<comment type="similarity">
    <text evidence="10">Belongs to the WD repeat CDC20/Fizzy family.</text>
</comment>
<sequence length="499" mass="54816">MAQFVFESDLHSLLQLDAPIPNAPVARWQRKAKEATGPAPSPMRAANRSHSAGRTPGRTPGKSSSKVQTTPSKPGGDRFIPQRSASQMEVASFLLSKENQPEDRGTPTKKEHQKAWSLNLNGFDVEEAKILRLSGKPQNAPEGYQNRLKVLYSQKATPGSSRKTCRYIPSLPDRILDAPEIRNDYYLNLVDWSSGNVLAVALDNSVYLWNAGSGDILQLLQMEQPGDYISSVAWIKEGNYLAVGTSNAEVQLWDVQQQKRLRNMTSHSARVSSLSWNSYILSSGSRSGHIHHHDVRVAEHHVATLSGHSQEVCGLRWAPDGRHLASGGNDNIVNVWPSGPGESGWAPLQTFTQHQGAVKAVAWCPWQSNILATGGGTSDRHIRIWNVCSGACLSAVDVHSQVCSILWSPHYKELISGHGFAQNQLVIWKYPTMAKVAELKGHTARVLGLTMSPDGATVASAAADETLRLWRCFEMDPALRREREKASVAKSSLIHQGIR</sequence>
<reference key="1">
    <citation type="submission" date="2000-06" db="EMBL/GenBank/DDBJ databases">
        <title>Mus musculus CDC20 mRNA, complete cds.</title>
        <authorList>
            <person name="Kuroda M."/>
            <person name="Oikawa K."/>
            <person name="Ohbayashi T."/>
            <person name="Iwata R."/>
            <person name="Kameta A."/>
            <person name="Ebine K."/>
        </authorList>
    </citation>
    <scope>NUCLEOTIDE SEQUENCE [MRNA]</scope>
</reference>
<reference key="2">
    <citation type="submission" date="2000-10" db="EMBL/GenBank/DDBJ databases">
        <title>Ssc1/Elovl1 and p55Cdc genes are co-expressed in a tail-to-tail array in proliferating cells.</title>
        <authorList>
            <person name="Asadi A."/>
            <person name="Jacobsson A."/>
        </authorList>
    </citation>
    <scope>NUCLEOTIDE SEQUENCE [MRNA]</scope>
</reference>
<reference key="3">
    <citation type="journal article" date="2005" name="Science">
        <title>The transcriptional landscape of the mammalian genome.</title>
        <authorList>
            <person name="Carninci P."/>
            <person name="Kasukawa T."/>
            <person name="Katayama S."/>
            <person name="Gough J."/>
            <person name="Frith M.C."/>
            <person name="Maeda N."/>
            <person name="Oyama R."/>
            <person name="Ravasi T."/>
            <person name="Lenhard B."/>
            <person name="Wells C."/>
            <person name="Kodzius R."/>
            <person name="Shimokawa K."/>
            <person name="Bajic V.B."/>
            <person name="Brenner S.E."/>
            <person name="Batalov S."/>
            <person name="Forrest A.R."/>
            <person name="Zavolan M."/>
            <person name="Davis M.J."/>
            <person name="Wilming L.G."/>
            <person name="Aidinis V."/>
            <person name="Allen J.E."/>
            <person name="Ambesi-Impiombato A."/>
            <person name="Apweiler R."/>
            <person name="Aturaliya R.N."/>
            <person name="Bailey T.L."/>
            <person name="Bansal M."/>
            <person name="Baxter L."/>
            <person name="Beisel K.W."/>
            <person name="Bersano T."/>
            <person name="Bono H."/>
            <person name="Chalk A.M."/>
            <person name="Chiu K.P."/>
            <person name="Choudhary V."/>
            <person name="Christoffels A."/>
            <person name="Clutterbuck D.R."/>
            <person name="Crowe M.L."/>
            <person name="Dalla E."/>
            <person name="Dalrymple B.P."/>
            <person name="de Bono B."/>
            <person name="Della Gatta G."/>
            <person name="di Bernardo D."/>
            <person name="Down T."/>
            <person name="Engstrom P."/>
            <person name="Fagiolini M."/>
            <person name="Faulkner G."/>
            <person name="Fletcher C.F."/>
            <person name="Fukushima T."/>
            <person name="Furuno M."/>
            <person name="Futaki S."/>
            <person name="Gariboldi M."/>
            <person name="Georgii-Hemming P."/>
            <person name="Gingeras T.R."/>
            <person name="Gojobori T."/>
            <person name="Green R.E."/>
            <person name="Gustincich S."/>
            <person name="Harbers M."/>
            <person name="Hayashi Y."/>
            <person name="Hensch T.K."/>
            <person name="Hirokawa N."/>
            <person name="Hill D."/>
            <person name="Huminiecki L."/>
            <person name="Iacono M."/>
            <person name="Ikeo K."/>
            <person name="Iwama A."/>
            <person name="Ishikawa T."/>
            <person name="Jakt M."/>
            <person name="Kanapin A."/>
            <person name="Katoh M."/>
            <person name="Kawasawa Y."/>
            <person name="Kelso J."/>
            <person name="Kitamura H."/>
            <person name="Kitano H."/>
            <person name="Kollias G."/>
            <person name="Krishnan S.P."/>
            <person name="Kruger A."/>
            <person name="Kummerfeld S.K."/>
            <person name="Kurochkin I.V."/>
            <person name="Lareau L.F."/>
            <person name="Lazarevic D."/>
            <person name="Lipovich L."/>
            <person name="Liu J."/>
            <person name="Liuni S."/>
            <person name="McWilliam S."/>
            <person name="Madan Babu M."/>
            <person name="Madera M."/>
            <person name="Marchionni L."/>
            <person name="Matsuda H."/>
            <person name="Matsuzawa S."/>
            <person name="Miki H."/>
            <person name="Mignone F."/>
            <person name="Miyake S."/>
            <person name="Morris K."/>
            <person name="Mottagui-Tabar S."/>
            <person name="Mulder N."/>
            <person name="Nakano N."/>
            <person name="Nakauchi H."/>
            <person name="Ng P."/>
            <person name="Nilsson R."/>
            <person name="Nishiguchi S."/>
            <person name="Nishikawa S."/>
            <person name="Nori F."/>
            <person name="Ohara O."/>
            <person name="Okazaki Y."/>
            <person name="Orlando V."/>
            <person name="Pang K.C."/>
            <person name="Pavan W.J."/>
            <person name="Pavesi G."/>
            <person name="Pesole G."/>
            <person name="Petrovsky N."/>
            <person name="Piazza S."/>
            <person name="Reed J."/>
            <person name="Reid J.F."/>
            <person name="Ring B.Z."/>
            <person name="Ringwald M."/>
            <person name="Rost B."/>
            <person name="Ruan Y."/>
            <person name="Salzberg S.L."/>
            <person name="Sandelin A."/>
            <person name="Schneider C."/>
            <person name="Schoenbach C."/>
            <person name="Sekiguchi K."/>
            <person name="Semple C.A."/>
            <person name="Seno S."/>
            <person name="Sessa L."/>
            <person name="Sheng Y."/>
            <person name="Shibata Y."/>
            <person name="Shimada H."/>
            <person name="Shimada K."/>
            <person name="Silva D."/>
            <person name="Sinclair B."/>
            <person name="Sperling S."/>
            <person name="Stupka E."/>
            <person name="Sugiura K."/>
            <person name="Sultana R."/>
            <person name="Takenaka Y."/>
            <person name="Taki K."/>
            <person name="Tammoja K."/>
            <person name="Tan S.L."/>
            <person name="Tang S."/>
            <person name="Taylor M.S."/>
            <person name="Tegner J."/>
            <person name="Teichmann S.A."/>
            <person name="Ueda H.R."/>
            <person name="van Nimwegen E."/>
            <person name="Verardo R."/>
            <person name="Wei C.L."/>
            <person name="Yagi K."/>
            <person name="Yamanishi H."/>
            <person name="Zabarovsky E."/>
            <person name="Zhu S."/>
            <person name="Zimmer A."/>
            <person name="Hide W."/>
            <person name="Bult C."/>
            <person name="Grimmond S.M."/>
            <person name="Teasdale R.D."/>
            <person name="Liu E.T."/>
            <person name="Brusic V."/>
            <person name="Quackenbush J."/>
            <person name="Wahlestedt C."/>
            <person name="Mattick J.S."/>
            <person name="Hume D.A."/>
            <person name="Kai C."/>
            <person name="Sasaki D."/>
            <person name="Tomaru Y."/>
            <person name="Fukuda S."/>
            <person name="Kanamori-Katayama M."/>
            <person name="Suzuki M."/>
            <person name="Aoki J."/>
            <person name="Arakawa T."/>
            <person name="Iida J."/>
            <person name="Imamura K."/>
            <person name="Itoh M."/>
            <person name="Kato T."/>
            <person name="Kawaji H."/>
            <person name="Kawagashira N."/>
            <person name="Kawashima T."/>
            <person name="Kojima M."/>
            <person name="Kondo S."/>
            <person name="Konno H."/>
            <person name="Nakano K."/>
            <person name="Ninomiya N."/>
            <person name="Nishio T."/>
            <person name="Okada M."/>
            <person name="Plessy C."/>
            <person name="Shibata K."/>
            <person name="Shiraki T."/>
            <person name="Suzuki S."/>
            <person name="Tagami M."/>
            <person name="Waki K."/>
            <person name="Watahiki A."/>
            <person name="Okamura-Oho Y."/>
            <person name="Suzuki H."/>
            <person name="Kawai J."/>
            <person name="Hayashizaki Y."/>
        </authorList>
    </citation>
    <scope>NUCLEOTIDE SEQUENCE [LARGE SCALE MRNA]</scope>
    <source>
        <strain>C57BL/6J</strain>
        <tissue>Kidney</tissue>
    </source>
</reference>
<reference key="4">
    <citation type="journal article" date="2004" name="Genome Res.">
        <title>The status, quality, and expansion of the NIH full-length cDNA project: the Mammalian Gene Collection (MGC).</title>
        <authorList>
            <consortium name="The MGC Project Team"/>
        </authorList>
    </citation>
    <scope>NUCLEOTIDE SEQUENCE [LARGE SCALE MRNA]</scope>
    <source>
        <tissue>Mammary tumor</tissue>
    </source>
</reference>
<reference key="5">
    <citation type="submission" date="2009-01" db="UniProtKB">
        <authorList>
            <person name="Lubec G."/>
            <person name="Sunyer B."/>
            <person name="Chen W.-Q."/>
        </authorList>
    </citation>
    <scope>PROTEIN SEQUENCE OF 59-66</scope>
    <scope>IDENTIFICATION BY MASS SPECTROMETRY</scope>
    <source>
        <strain>OF1</strain>
        <tissue>Hippocampus</tissue>
    </source>
</reference>
<reference key="6">
    <citation type="journal article" date="2004" name="EMBO J.">
        <title>Functional interaction between p90Rsk2 and Emi1 contributes to the metaphase arrest of mouse oocytes.</title>
        <authorList>
            <person name="Paronetto M.P."/>
            <person name="Giorda E."/>
            <person name="Carsetti R."/>
            <person name="Rossi P."/>
            <person name="Geremia R."/>
            <person name="Sette C."/>
        </authorList>
    </citation>
    <scope>INTERACTION WITH FBXO5</scope>
</reference>
<reference key="7">
    <citation type="journal article" date="2004" name="J. Biol. Chem.">
        <title>Speriolin is a novel spermatogenic cell-specific centrosomal protein associated with the seventh WD motif of Cdc20.</title>
        <authorList>
            <person name="Goto M."/>
            <person name="Eddy E.M."/>
        </authorList>
    </citation>
    <scope>INTERACTION WITH SPATC1</scope>
    <scope>IDENTIFICATION IN A COMPLEX WITH CDC27; SPATC1 AND TUBG1</scope>
</reference>
<reference key="8">
    <citation type="journal article" date="2009" name="Science">
        <title>A Cdc20-APC ubiquitin signaling pathway regulates presynaptic differentiation.</title>
        <authorList>
            <person name="Yang Y."/>
            <person name="Kim A.H."/>
            <person name="Yamada T."/>
            <person name="Wu B."/>
            <person name="Bilimoria P.M."/>
            <person name="Ikeuchi Y."/>
            <person name="de la Iglesia N."/>
            <person name="Shen J."/>
            <person name="Bonni A."/>
        </authorList>
    </citation>
    <scope>FUNCTION</scope>
    <scope>INTERACTION WITH NEUROD2</scope>
</reference>
<reference key="9">
    <citation type="journal article" date="2011" name="Cancer Cell">
        <title>SIRT2 maintains genome integrity and suppresses tumorigenesis through regulating APC/C activity.</title>
        <authorList>
            <person name="Kim H.S."/>
            <person name="Vassilopoulos A."/>
            <person name="Wang R.H."/>
            <person name="Lahusen T."/>
            <person name="Xiao Z."/>
            <person name="Xu X."/>
            <person name="Li C."/>
            <person name="Veenstra T.D."/>
            <person name="Li B."/>
            <person name="Yu H."/>
            <person name="Ji J."/>
            <person name="Wang X.W."/>
            <person name="Park S.H."/>
            <person name="Cha Y.I."/>
            <person name="Gius D."/>
            <person name="Deng C.X."/>
        </authorList>
    </citation>
    <scope>ACETYLATION</scope>
    <scope>DEACETYLATION BY SIRT2</scope>
    <scope>INTERACTION WITH SIRT2</scope>
</reference>
<reference key="10">
    <citation type="journal article" date="2020" name="Protein Cell">
        <title>Biallelic mutations in CDC20 cause female infertility characterized by abnormalities in oocyte maturation and early embryonic development.</title>
        <authorList>
            <person name="Zhao L."/>
            <person name="Xue S."/>
            <person name="Yao Z."/>
            <person name="Shi J."/>
            <person name="Chen B."/>
            <person name="Wu L."/>
            <person name="Sun L."/>
            <person name="Xu Y."/>
            <person name="Yan Z."/>
            <person name="Li B."/>
            <person name="Mao X."/>
            <person name="Fu J."/>
            <person name="Zhang Z."/>
            <person name="Mu J."/>
            <person name="Wang W."/>
            <person name="Du J."/>
            <person name="Liu S."/>
            <person name="Dong J."/>
            <person name="Wang W."/>
            <person name="Li Q."/>
            <person name="He L."/>
            <person name="Jin L."/>
            <person name="Liang X."/>
            <person name="Kuang Y."/>
            <person name="Sun X."/>
            <person name="Wang L."/>
            <person name="Sang Q."/>
        </authorList>
    </citation>
    <scope>FUNCTION</scope>
</reference>
<reference key="11">
    <citation type="journal article" date="2021" name="J. Biol. Chem.">
        <title>Oscillation of Cdc20-APC/C-mediated CAMDI stability is critical for cortical neuron migration.</title>
        <authorList>
            <person name="OkudaOkuda S."/>
            <person name="Sato M."/>
            <person name="Kato S."/>
            <person name="Nagashima S."/>
            <person name="Inatome R."/>
            <person name="Yanagi S."/>
            <person name="Fukuda T."/>
        </authorList>
    </citation>
    <scope>FUNCTION</scope>
    <scope>SUBCELLULAR LOCATION</scope>
</reference>
<evidence type="ECO:0000250" key="1"/>
<evidence type="ECO:0000250" key="2">
    <source>
        <dbReference type="UniProtKB" id="Q12834"/>
    </source>
</evidence>
<evidence type="ECO:0000256" key="3">
    <source>
        <dbReference type="SAM" id="MobiDB-lite"/>
    </source>
</evidence>
<evidence type="ECO:0000269" key="4">
    <source>
    </source>
</evidence>
<evidence type="ECO:0000269" key="5">
    <source>
    </source>
</evidence>
<evidence type="ECO:0000269" key="6">
    <source>
    </source>
</evidence>
<evidence type="ECO:0000269" key="7">
    <source>
    </source>
</evidence>
<evidence type="ECO:0000269" key="8">
    <source>
    </source>
</evidence>
<evidence type="ECO:0000269" key="9">
    <source>
    </source>
</evidence>
<evidence type="ECO:0000305" key="10"/>
<accession>Q9JJ66</accession>
<accession>Q3TGP1</accession>
<accession>Q8BPG4</accession>
<accession>Q99LK3</accession>
<protein>
    <recommendedName>
        <fullName>Cell division cycle protein 20 homolog</fullName>
        <shortName>mmCdc20</shortName>
    </recommendedName>
    <alternativeName>
        <fullName>p55CDC</fullName>
    </alternativeName>
</protein>
<dbReference type="EMBL" id="AB045313">
    <property type="protein sequence ID" value="BAA97451.1"/>
    <property type="molecule type" value="mRNA"/>
</dbReference>
<dbReference type="EMBL" id="AF312208">
    <property type="protein sequence ID" value="AAL25714.1"/>
    <property type="molecule type" value="mRNA"/>
</dbReference>
<dbReference type="EMBL" id="AK075998">
    <property type="protein sequence ID" value="BAC36109.1"/>
    <property type="molecule type" value="mRNA"/>
</dbReference>
<dbReference type="EMBL" id="AK076030">
    <property type="protein sequence ID" value="BAC36132.1"/>
    <property type="molecule type" value="mRNA"/>
</dbReference>
<dbReference type="EMBL" id="AK083459">
    <property type="protein sequence ID" value="BAC38922.1"/>
    <property type="molecule type" value="mRNA"/>
</dbReference>
<dbReference type="EMBL" id="AK168650">
    <property type="protein sequence ID" value="BAE40507.1"/>
    <property type="molecule type" value="mRNA"/>
</dbReference>
<dbReference type="EMBL" id="BC003215">
    <property type="protein sequence ID" value="AAH03215.1"/>
    <property type="molecule type" value="mRNA"/>
</dbReference>
<dbReference type="CCDS" id="CCDS18551.1"/>
<dbReference type="RefSeq" id="NP_075712.2">
    <property type="nucleotide sequence ID" value="NM_023223.2"/>
</dbReference>
<dbReference type="SMR" id="Q9JJ66"/>
<dbReference type="BioGRID" id="223749">
    <property type="interactions" value="49"/>
</dbReference>
<dbReference type="ComplexPortal" id="CPX-3968">
    <property type="entry name" value="Mitotic Checkpoint Complex"/>
</dbReference>
<dbReference type="FunCoup" id="Q9JJ66">
    <property type="interactions" value="1970"/>
</dbReference>
<dbReference type="IntAct" id="Q9JJ66">
    <property type="interactions" value="39"/>
</dbReference>
<dbReference type="MINT" id="Q9JJ66"/>
<dbReference type="STRING" id="10090.ENSMUSP00000006565"/>
<dbReference type="iPTMnet" id="Q9JJ66"/>
<dbReference type="PhosphoSitePlus" id="Q9JJ66"/>
<dbReference type="jPOST" id="Q9JJ66"/>
<dbReference type="PaxDb" id="10090-ENSMUSP00000006565"/>
<dbReference type="PeptideAtlas" id="Q9JJ66"/>
<dbReference type="ProteomicsDB" id="283764"/>
<dbReference type="Pumba" id="Q9JJ66"/>
<dbReference type="Antibodypedia" id="3864">
    <property type="antibodies" value="727 antibodies from 38 providers"/>
</dbReference>
<dbReference type="DNASU" id="107995"/>
<dbReference type="Ensembl" id="ENSMUST00000006565.13">
    <property type="protein sequence ID" value="ENSMUSP00000006565.7"/>
    <property type="gene ID" value="ENSMUSG00000006398.16"/>
</dbReference>
<dbReference type="GeneID" id="107995"/>
<dbReference type="KEGG" id="mmu:107995"/>
<dbReference type="UCSC" id="uc008ukc.2">
    <property type="organism name" value="mouse"/>
</dbReference>
<dbReference type="AGR" id="MGI:1859866"/>
<dbReference type="CTD" id="991"/>
<dbReference type="MGI" id="MGI:1859866">
    <property type="gene designation" value="Cdc20"/>
</dbReference>
<dbReference type="VEuPathDB" id="HostDB:ENSMUSG00000006398"/>
<dbReference type="eggNOG" id="KOG0305">
    <property type="taxonomic scope" value="Eukaryota"/>
</dbReference>
<dbReference type="GeneTree" id="ENSGT00950000183104"/>
<dbReference type="HOGENOM" id="CLU_014831_6_1_1"/>
<dbReference type="InParanoid" id="Q9JJ66"/>
<dbReference type="OMA" id="CSGACLN"/>
<dbReference type="OrthoDB" id="10263272at2759"/>
<dbReference type="PhylomeDB" id="Q9JJ66"/>
<dbReference type="TreeFam" id="TF101065"/>
<dbReference type="Reactome" id="R-MMU-141405">
    <property type="pathway name" value="Inhibition of the proteolytic activity of APC/C required for the onset of anaphase by mitotic spindle checkpoint components"/>
</dbReference>
<dbReference type="Reactome" id="R-MMU-141430">
    <property type="pathway name" value="Inactivation of APC/C via direct inhibition of the APC/C complex"/>
</dbReference>
<dbReference type="Reactome" id="R-MMU-141444">
    <property type="pathway name" value="Amplification of signal from unattached kinetochores via a MAD2 inhibitory signal"/>
</dbReference>
<dbReference type="Reactome" id="R-MMU-174048">
    <property type="pathway name" value="APC/C:Cdc20 mediated degradation of Cyclin B"/>
</dbReference>
<dbReference type="Reactome" id="R-MMU-174113">
    <property type="pathway name" value="SCF-beta-TrCP mediated degradation of Emi1"/>
</dbReference>
<dbReference type="Reactome" id="R-MMU-174154">
    <property type="pathway name" value="APC/C:Cdc20 mediated degradation of Securin"/>
</dbReference>
<dbReference type="Reactome" id="R-MMU-174178">
    <property type="pathway name" value="APC/C:Cdh1 mediated degradation of Cdc20 and other APC/C:Cdh1 targeted proteins in late mitosis/early G1"/>
</dbReference>
<dbReference type="Reactome" id="R-MMU-174184">
    <property type="pathway name" value="Cdc20:Phospho-APC/C mediated degradation of Cyclin A"/>
</dbReference>
<dbReference type="Reactome" id="R-MMU-176407">
    <property type="pathway name" value="Conversion from APC/C:Cdc20 to APC/C:Cdh1 in late anaphase"/>
</dbReference>
<dbReference type="Reactome" id="R-MMU-176408">
    <property type="pathway name" value="Regulation of APC/C activators between G1/S and early anaphase"/>
</dbReference>
<dbReference type="Reactome" id="R-MMU-176409">
    <property type="pathway name" value="APC/C:Cdc20 mediated degradation of mitotic proteins"/>
</dbReference>
<dbReference type="Reactome" id="R-MMU-176417">
    <property type="pathway name" value="Phosphorylation of Emi1"/>
</dbReference>
<dbReference type="Reactome" id="R-MMU-179409">
    <property type="pathway name" value="APC-Cdc20 mediated degradation of Nek2A"/>
</dbReference>
<dbReference type="Reactome" id="R-MMU-2467813">
    <property type="pathway name" value="Separation of Sister Chromatids"/>
</dbReference>
<dbReference type="Reactome" id="R-MMU-2500257">
    <property type="pathway name" value="Resolution of Sister Chromatid Cohesion"/>
</dbReference>
<dbReference type="Reactome" id="R-MMU-5663220">
    <property type="pathway name" value="RHO GTPases Activate Formins"/>
</dbReference>
<dbReference type="Reactome" id="R-MMU-5689880">
    <property type="pathway name" value="Ub-specific processing proteases"/>
</dbReference>
<dbReference type="Reactome" id="R-MMU-68877">
    <property type="pathway name" value="Mitotic Prometaphase"/>
</dbReference>
<dbReference type="Reactome" id="R-MMU-9648025">
    <property type="pathway name" value="EML4 and NUDC in mitotic spindle formation"/>
</dbReference>
<dbReference type="Reactome" id="R-MMU-983168">
    <property type="pathway name" value="Antigen processing: Ubiquitination &amp; Proteasome degradation"/>
</dbReference>
<dbReference type="UniPathway" id="UPA00143"/>
<dbReference type="BioGRID-ORCS" id="107995">
    <property type="hits" value="25 hits in 81 CRISPR screens"/>
</dbReference>
<dbReference type="CD-CODE" id="01CA17F3">
    <property type="entry name" value="Centrosome"/>
</dbReference>
<dbReference type="ChiTaRS" id="Cdc20">
    <property type="organism name" value="mouse"/>
</dbReference>
<dbReference type="PRO" id="PR:Q9JJ66"/>
<dbReference type="Proteomes" id="UP000000589">
    <property type="component" value="Chromosome 4"/>
</dbReference>
<dbReference type="RNAct" id="Q9JJ66">
    <property type="molecule type" value="protein"/>
</dbReference>
<dbReference type="Bgee" id="ENSMUSG00000006398">
    <property type="expression patterns" value="Expressed in cleaving embryo and 224 other cell types or tissues"/>
</dbReference>
<dbReference type="ExpressionAtlas" id="Q9JJ66">
    <property type="expression patterns" value="baseline and differential"/>
</dbReference>
<dbReference type="GO" id="GO:0005680">
    <property type="term" value="C:anaphase-promoting complex"/>
    <property type="evidence" value="ECO:0007669"/>
    <property type="project" value="Ensembl"/>
</dbReference>
<dbReference type="GO" id="GO:0005813">
    <property type="term" value="C:centrosome"/>
    <property type="evidence" value="ECO:0000314"/>
    <property type="project" value="UniProtKB"/>
</dbReference>
<dbReference type="GO" id="GO:0005829">
    <property type="term" value="C:cytosol"/>
    <property type="evidence" value="ECO:0007669"/>
    <property type="project" value="Ensembl"/>
</dbReference>
<dbReference type="GO" id="GO:0000776">
    <property type="term" value="C:kinetochore"/>
    <property type="evidence" value="ECO:0000314"/>
    <property type="project" value="UniProtKB"/>
</dbReference>
<dbReference type="GO" id="GO:0033597">
    <property type="term" value="C:mitotic checkpoint complex"/>
    <property type="evidence" value="ECO:0000266"/>
    <property type="project" value="ComplexPortal"/>
</dbReference>
<dbReference type="GO" id="GO:0005654">
    <property type="term" value="C:nucleoplasm"/>
    <property type="evidence" value="ECO:0007669"/>
    <property type="project" value="Ensembl"/>
</dbReference>
<dbReference type="GO" id="GO:0048471">
    <property type="term" value="C:perinuclear region of cytoplasm"/>
    <property type="evidence" value="ECO:0007669"/>
    <property type="project" value="Ensembl"/>
</dbReference>
<dbReference type="GO" id="GO:0000922">
    <property type="term" value="C:spindle pole"/>
    <property type="evidence" value="ECO:0007669"/>
    <property type="project" value="UniProtKB-SubCell"/>
</dbReference>
<dbReference type="GO" id="GO:0010997">
    <property type="term" value="F:anaphase-promoting complex binding"/>
    <property type="evidence" value="ECO:0007669"/>
    <property type="project" value="Ensembl"/>
</dbReference>
<dbReference type="GO" id="GO:0042826">
    <property type="term" value="F:histone deacetylase binding"/>
    <property type="evidence" value="ECO:0007669"/>
    <property type="project" value="Ensembl"/>
</dbReference>
<dbReference type="GO" id="GO:1990756">
    <property type="term" value="F:ubiquitin-like ligase-substrate adaptor activity"/>
    <property type="evidence" value="ECO:0007669"/>
    <property type="project" value="Ensembl"/>
</dbReference>
<dbReference type="GO" id="GO:0097027">
    <property type="term" value="F:ubiquitin-protein transferase activator activity"/>
    <property type="evidence" value="ECO:0007669"/>
    <property type="project" value="InterPro"/>
</dbReference>
<dbReference type="GO" id="GO:0031145">
    <property type="term" value="P:anaphase-promoting complex-dependent catabolic process"/>
    <property type="evidence" value="ECO:0007669"/>
    <property type="project" value="Ensembl"/>
</dbReference>
<dbReference type="GO" id="GO:0030154">
    <property type="term" value="P:cell differentiation"/>
    <property type="evidence" value="ECO:0007669"/>
    <property type="project" value="UniProtKB-KW"/>
</dbReference>
<dbReference type="GO" id="GO:0051301">
    <property type="term" value="P:cell division"/>
    <property type="evidence" value="ECO:0007669"/>
    <property type="project" value="UniProtKB-KW"/>
</dbReference>
<dbReference type="GO" id="GO:0044784">
    <property type="term" value="P:metaphase/anaphase transition of cell cycle"/>
    <property type="evidence" value="ECO:0000314"/>
    <property type="project" value="UniProtKB"/>
</dbReference>
<dbReference type="GO" id="GO:1990949">
    <property type="term" value="P:metaphase/anaphase transition of meiosis I"/>
    <property type="evidence" value="ECO:0000314"/>
    <property type="project" value="UniProtKB"/>
</dbReference>
<dbReference type="GO" id="GO:0007064">
    <property type="term" value="P:mitotic sister chromatid cohesion"/>
    <property type="evidence" value="ECO:0000316"/>
    <property type="project" value="MGI"/>
</dbReference>
<dbReference type="GO" id="GO:0090307">
    <property type="term" value="P:mitotic spindle assembly"/>
    <property type="evidence" value="ECO:0000315"/>
    <property type="project" value="MGI"/>
</dbReference>
<dbReference type="GO" id="GO:0007094">
    <property type="term" value="P:mitotic spindle assembly checkpoint signaling"/>
    <property type="evidence" value="ECO:0000303"/>
    <property type="project" value="ComplexPortal"/>
</dbReference>
<dbReference type="GO" id="GO:0007399">
    <property type="term" value="P:nervous system development"/>
    <property type="evidence" value="ECO:0007669"/>
    <property type="project" value="UniProtKB-KW"/>
</dbReference>
<dbReference type="GO" id="GO:0008284">
    <property type="term" value="P:positive regulation of cell population proliferation"/>
    <property type="evidence" value="ECO:0007669"/>
    <property type="project" value="Ensembl"/>
</dbReference>
<dbReference type="GO" id="GO:0045842">
    <property type="term" value="P:positive regulation of mitotic metaphase/anaphase transition"/>
    <property type="evidence" value="ECO:0007669"/>
    <property type="project" value="Ensembl"/>
</dbReference>
<dbReference type="GO" id="GO:0090129">
    <property type="term" value="P:positive regulation of synapse maturation"/>
    <property type="evidence" value="ECO:0000314"/>
    <property type="project" value="UniProtKB"/>
</dbReference>
<dbReference type="GO" id="GO:0031915">
    <property type="term" value="P:positive regulation of synaptic plasticity"/>
    <property type="evidence" value="ECO:0000314"/>
    <property type="project" value="UniProtKB"/>
</dbReference>
<dbReference type="GO" id="GO:1904668">
    <property type="term" value="P:positive regulation of ubiquitin protein ligase activity"/>
    <property type="evidence" value="ECO:0000250"/>
    <property type="project" value="UniProtKB"/>
</dbReference>
<dbReference type="GO" id="GO:0016567">
    <property type="term" value="P:protein ubiquitination"/>
    <property type="evidence" value="ECO:0007669"/>
    <property type="project" value="UniProtKB-UniPathway"/>
</dbReference>
<dbReference type="GO" id="GO:0050773">
    <property type="term" value="P:regulation of dendrite development"/>
    <property type="evidence" value="ECO:0007669"/>
    <property type="project" value="Ensembl"/>
</dbReference>
<dbReference type="GO" id="GO:0040020">
    <property type="term" value="P:regulation of meiotic nuclear division"/>
    <property type="evidence" value="ECO:0000316"/>
    <property type="project" value="MGI"/>
</dbReference>
<dbReference type="CDD" id="cd00200">
    <property type="entry name" value="WD40"/>
    <property type="match status" value="1"/>
</dbReference>
<dbReference type="FunFam" id="2.130.10.10:FF:000224">
    <property type="entry name" value="cell division cycle protein 20 homolog"/>
    <property type="match status" value="1"/>
</dbReference>
<dbReference type="Gene3D" id="2.130.10.10">
    <property type="entry name" value="YVTN repeat-like/Quinoprotein amine dehydrogenase"/>
    <property type="match status" value="1"/>
</dbReference>
<dbReference type="InterPro" id="IPR033010">
    <property type="entry name" value="Cdc20/Fizzy"/>
</dbReference>
<dbReference type="InterPro" id="IPR015943">
    <property type="entry name" value="WD40/YVTN_repeat-like_dom_sf"/>
</dbReference>
<dbReference type="InterPro" id="IPR056150">
    <property type="entry name" value="WD40_CDC20-Fz"/>
</dbReference>
<dbReference type="InterPro" id="IPR036322">
    <property type="entry name" value="WD40_repeat_dom_sf"/>
</dbReference>
<dbReference type="InterPro" id="IPR001680">
    <property type="entry name" value="WD40_rpt"/>
</dbReference>
<dbReference type="PANTHER" id="PTHR19918">
    <property type="entry name" value="CELL DIVISION CYCLE 20 CDC20 FIZZY -RELATED"/>
    <property type="match status" value="1"/>
</dbReference>
<dbReference type="PANTHER" id="PTHR19918:SF3">
    <property type="entry name" value="CELL DIVISION CYCLE PROTEIN 20 HOMOLOG"/>
    <property type="match status" value="1"/>
</dbReference>
<dbReference type="Pfam" id="PF24807">
    <property type="entry name" value="WD40_CDC20-Fz"/>
    <property type="match status" value="1"/>
</dbReference>
<dbReference type="SMART" id="SM00320">
    <property type="entry name" value="WD40"/>
    <property type="match status" value="7"/>
</dbReference>
<dbReference type="SUPFAM" id="SSF50978">
    <property type="entry name" value="WD40 repeat-like"/>
    <property type="match status" value="1"/>
</dbReference>
<dbReference type="PROSITE" id="PS00678">
    <property type="entry name" value="WD_REPEATS_1"/>
    <property type="match status" value="2"/>
</dbReference>
<dbReference type="PROSITE" id="PS50082">
    <property type="entry name" value="WD_REPEATS_2"/>
    <property type="match status" value="3"/>
</dbReference>
<dbReference type="PROSITE" id="PS50294">
    <property type="entry name" value="WD_REPEATS_REGION"/>
    <property type="match status" value="1"/>
</dbReference>
<name>CDC20_MOUSE</name>
<keyword id="KW-0007">Acetylation</keyword>
<keyword id="KW-0131">Cell cycle</keyword>
<keyword id="KW-0132">Cell division</keyword>
<keyword id="KW-0137">Centromere</keyword>
<keyword id="KW-0158">Chromosome</keyword>
<keyword id="KW-0963">Cytoplasm</keyword>
<keyword id="KW-0206">Cytoskeleton</keyword>
<keyword id="KW-0221">Differentiation</keyword>
<keyword id="KW-0903">Direct protein sequencing</keyword>
<keyword id="KW-1017">Isopeptide bond</keyword>
<keyword id="KW-0995">Kinetochore</keyword>
<keyword id="KW-0498">Mitosis</keyword>
<keyword id="KW-0524">Neurogenesis</keyword>
<keyword id="KW-0597">Phosphoprotein</keyword>
<keyword id="KW-1185">Reference proteome</keyword>
<keyword id="KW-0677">Repeat</keyword>
<keyword id="KW-0832">Ubl conjugation</keyword>
<keyword id="KW-0833">Ubl conjugation pathway</keyword>
<keyword id="KW-0853">WD repeat</keyword>
<feature type="chain" id="PRO_0000050901" description="Cell division cycle protein 20 homolog">
    <location>
        <begin position="1"/>
        <end position="499"/>
    </location>
</feature>
<feature type="repeat" description="WD 1">
    <location>
        <begin position="182"/>
        <end position="221"/>
    </location>
</feature>
<feature type="repeat" description="WD 2">
    <location>
        <begin position="224"/>
        <end position="263"/>
    </location>
</feature>
<feature type="repeat" description="WD 3">
    <location>
        <begin position="266"/>
        <end position="303"/>
    </location>
</feature>
<feature type="repeat" description="WD 4">
    <location>
        <begin position="307"/>
        <end position="346"/>
    </location>
</feature>
<feature type="repeat" description="WD 5">
    <location>
        <begin position="353"/>
        <end position="395"/>
    </location>
</feature>
<feature type="repeat" description="WD 6">
    <location>
        <begin position="397"/>
        <end position="438"/>
    </location>
</feature>
<feature type="repeat" description="WD 7">
    <location>
        <begin position="441"/>
        <end position="480"/>
    </location>
</feature>
<feature type="region of interest" description="Disordered" evidence="3">
    <location>
        <begin position="27"/>
        <end position="82"/>
    </location>
</feature>
<feature type="compositionally biased region" description="Polar residues" evidence="3">
    <location>
        <begin position="61"/>
        <end position="72"/>
    </location>
</feature>
<feature type="modified residue" description="Phosphoserine" evidence="2">
    <location>
        <position position="41"/>
    </location>
</feature>
<feature type="modified residue" description="N6-acetyllysine" evidence="2">
    <location>
        <position position="66"/>
    </location>
</feature>
<feature type="modified residue" description="Phosphothreonine" evidence="2">
    <location>
        <position position="70"/>
    </location>
</feature>
<feature type="modified residue" description="Phosphoserine" evidence="2">
    <location>
        <position position="72"/>
    </location>
</feature>
<feature type="modified residue" description="Phosphoserine" evidence="2">
    <location>
        <position position="92"/>
    </location>
</feature>
<feature type="modified residue" description="Phosphothreonine" evidence="2">
    <location>
        <position position="106"/>
    </location>
</feature>
<feature type="modified residue" description="Phosphoserine" evidence="2">
    <location>
        <position position="153"/>
    </location>
</feature>
<feature type="modified residue" description="Phosphothreonine" evidence="2">
    <location>
        <position position="157"/>
    </location>
</feature>
<feature type="modified residue" description="Phosphoserine" evidence="2">
    <location>
        <position position="161"/>
    </location>
</feature>
<feature type="cross-link" description="Glycyl lysine isopeptide (Lys-Gly) (interchain with G-Cter in ubiquitin)" evidence="2">
    <location>
        <position position="485"/>
    </location>
</feature>
<feature type="cross-link" description="Glycyl lysine isopeptide (Lys-Gly) (interchain with G-Cter in ubiquitin)" evidence="2">
    <location>
        <position position="490"/>
    </location>
</feature>
<feature type="sequence conflict" description="In Ref. 1; BAA97451." evidence="10" ref="1">
    <original>A</original>
    <variation>G</variation>
    <location>
        <position position="85"/>
    </location>
</feature>
<feature type="sequence conflict" description="In Ref. 3; BAC36132." evidence="10" ref="3">
    <original>D</original>
    <variation>E</variation>
    <location>
        <position position="397"/>
    </location>
</feature>
<proteinExistence type="evidence at protein level"/>